<keyword id="KW-0131">Cell cycle</keyword>
<keyword id="KW-0132">Cell division</keyword>
<keyword id="KW-0963">Cytoplasm</keyword>
<keyword id="KW-0227">DNA damage</keyword>
<keyword id="KW-0498">Mitosis</keyword>
<keyword id="KW-0539">Nucleus</keyword>
<keyword id="KW-1185">Reference proteome</keyword>
<protein>
    <recommendedName>
        <fullName>Checkpoint protein hus1 homolog</fullName>
    </recommendedName>
</protein>
<proteinExistence type="inferred from homology"/>
<feature type="chain" id="PRO_0000328201" description="Checkpoint protein hus1 homolog">
    <location>
        <begin position="1"/>
        <end position="271"/>
    </location>
</feature>
<evidence type="ECO:0000250" key="1"/>
<evidence type="ECO:0000305" key="2"/>
<accession>Q54NC0</accession>
<sequence length="271" mass="30648">MKFKAKISKASILLKTVQNIMKIYNECICHITPDKLRFIIQSDFNDGMQVFCEIQRSLIFENFTIESLSDNEIQFQLDLESLRRVLQSATSNGVSDIFTNLTKVRGGPVLHFIIKSGTSGTVIFQDIPIVLLTAQQMAQINEPTLPDPLVHILLPNLKNLQKVIDKMKNISDCLKIMIAMNNRLSFEVETSSGSISTFYSGLDHPQFGDHVLSPDLQATVCVDIKKFAKVLHIHQLKPSEVVLCLYERSIIVHVVLTDIMITYYLPVLIKN</sequence>
<name>HUS1_DICDI</name>
<organism>
    <name type="scientific">Dictyostelium discoideum</name>
    <name type="common">Social amoeba</name>
    <dbReference type="NCBI Taxonomy" id="44689"/>
    <lineage>
        <taxon>Eukaryota</taxon>
        <taxon>Amoebozoa</taxon>
        <taxon>Evosea</taxon>
        <taxon>Eumycetozoa</taxon>
        <taxon>Dictyostelia</taxon>
        <taxon>Dictyosteliales</taxon>
        <taxon>Dictyosteliaceae</taxon>
        <taxon>Dictyostelium</taxon>
    </lineage>
</organism>
<comment type="function">
    <text evidence="1">Essential in controlling the S-M checkpoint that couples mitosis to the completion of DNA replication. It is also required for the response to DNA damage (By similarity).</text>
</comment>
<comment type="subcellular location">
    <subcellularLocation>
        <location evidence="1">Nucleus</location>
    </subcellularLocation>
    <subcellularLocation>
        <location evidence="1">Cytoplasm</location>
    </subcellularLocation>
</comment>
<comment type="similarity">
    <text evidence="2">Belongs to the HUS1 family.</text>
</comment>
<reference key="1">
    <citation type="journal article" date="2005" name="Nature">
        <title>The genome of the social amoeba Dictyostelium discoideum.</title>
        <authorList>
            <person name="Eichinger L."/>
            <person name="Pachebat J.A."/>
            <person name="Gloeckner G."/>
            <person name="Rajandream M.A."/>
            <person name="Sucgang R."/>
            <person name="Berriman M."/>
            <person name="Song J."/>
            <person name="Olsen R."/>
            <person name="Szafranski K."/>
            <person name="Xu Q."/>
            <person name="Tunggal B."/>
            <person name="Kummerfeld S."/>
            <person name="Madera M."/>
            <person name="Konfortov B.A."/>
            <person name="Rivero F."/>
            <person name="Bankier A.T."/>
            <person name="Lehmann R."/>
            <person name="Hamlin N."/>
            <person name="Davies R."/>
            <person name="Gaudet P."/>
            <person name="Fey P."/>
            <person name="Pilcher K."/>
            <person name="Chen G."/>
            <person name="Saunders D."/>
            <person name="Sodergren E.J."/>
            <person name="Davis P."/>
            <person name="Kerhornou A."/>
            <person name="Nie X."/>
            <person name="Hall N."/>
            <person name="Anjard C."/>
            <person name="Hemphill L."/>
            <person name="Bason N."/>
            <person name="Farbrother P."/>
            <person name="Desany B."/>
            <person name="Just E."/>
            <person name="Morio T."/>
            <person name="Rost R."/>
            <person name="Churcher C.M."/>
            <person name="Cooper J."/>
            <person name="Haydock S."/>
            <person name="van Driessche N."/>
            <person name="Cronin A."/>
            <person name="Goodhead I."/>
            <person name="Muzny D.M."/>
            <person name="Mourier T."/>
            <person name="Pain A."/>
            <person name="Lu M."/>
            <person name="Harper D."/>
            <person name="Lindsay R."/>
            <person name="Hauser H."/>
            <person name="James K.D."/>
            <person name="Quiles M."/>
            <person name="Madan Babu M."/>
            <person name="Saito T."/>
            <person name="Buchrieser C."/>
            <person name="Wardroper A."/>
            <person name="Felder M."/>
            <person name="Thangavelu M."/>
            <person name="Johnson D."/>
            <person name="Knights A."/>
            <person name="Loulseged H."/>
            <person name="Mungall K.L."/>
            <person name="Oliver K."/>
            <person name="Price C."/>
            <person name="Quail M.A."/>
            <person name="Urushihara H."/>
            <person name="Hernandez J."/>
            <person name="Rabbinowitsch E."/>
            <person name="Steffen D."/>
            <person name="Sanders M."/>
            <person name="Ma J."/>
            <person name="Kohara Y."/>
            <person name="Sharp S."/>
            <person name="Simmonds M.N."/>
            <person name="Spiegler S."/>
            <person name="Tivey A."/>
            <person name="Sugano S."/>
            <person name="White B."/>
            <person name="Walker D."/>
            <person name="Woodward J.R."/>
            <person name="Winckler T."/>
            <person name="Tanaka Y."/>
            <person name="Shaulsky G."/>
            <person name="Schleicher M."/>
            <person name="Weinstock G.M."/>
            <person name="Rosenthal A."/>
            <person name="Cox E.C."/>
            <person name="Chisholm R.L."/>
            <person name="Gibbs R.A."/>
            <person name="Loomis W.F."/>
            <person name="Platzer M."/>
            <person name="Kay R.R."/>
            <person name="Williams J.G."/>
            <person name="Dear P.H."/>
            <person name="Noegel A.A."/>
            <person name="Barrell B.G."/>
            <person name="Kuspa A."/>
        </authorList>
    </citation>
    <scope>NUCLEOTIDE SEQUENCE [LARGE SCALE GENOMIC DNA]</scope>
    <source>
        <strain>AX4</strain>
    </source>
</reference>
<dbReference type="EMBL" id="AAFI02000079">
    <property type="protein sequence ID" value="EAL64751.1"/>
    <property type="molecule type" value="Genomic_DNA"/>
</dbReference>
<dbReference type="RefSeq" id="XP_638260.1">
    <property type="nucleotide sequence ID" value="XM_633168.1"/>
</dbReference>
<dbReference type="SMR" id="Q54NC0"/>
<dbReference type="FunCoup" id="Q54NC0">
    <property type="interactions" value="380"/>
</dbReference>
<dbReference type="STRING" id="44689.Q54NC0"/>
<dbReference type="PaxDb" id="44689-DDB0233010"/>
<dbReference type="EnsemblProtists" id="EAL64751">
    <property type="protein sequence ID" value="EAL64751"/>
    <property type="gene ID" value="DDB_G0285353"/>
</dbReference>
<dbReference type="GeneID" id="8625068"/>
<dbReference type="KEGG" id="ddi:DDB_G0285353"/>
<dbReference type="dictyBase" id="DDB_G0285353">
    <property type="gene designation" value="hus1"/>
</dbReference>
<dbReference type="VEuPathDB" id="AmoebaDB:DDB_G0285353"/>
<dbReference type="eggNOG" id="KOG3999">
    <property type="taxonomic scope" value="Eukaryota"/>
</dbReference>
<dbReference type="HOGENOM" id="CLU_035754_2_0_1"/>
<dbReference type="InParanoid" id="Q54NC0"/>
<dbReference type="OMA" id="VCWMRLE"/>
<dbReference type="PhylomeDB" id="Q54NC0"/>
<dbReference type="Reactome" id="R-DDI-176187">
    <property type="pathway name" value="Activation of ATR in response to replication stress"/>
</dbReference>
<dbReference type="PRO" id="PR:Q54NC0"/>
<dbReference type="Proteomes" id="UP000002195">
    <property type="component" value="Chromosome 4"/>
</dbReference>
<dbReference type="GO" id="GO:0030896">
    <property type="term" value="C:checkpoint clamp complex"/>
    <property type="evidence" value="ECO:0000250"/>
    <property type="project" value="dictyBase"/>
</dbReference>
<dbReference type="GO" id="GO:0005737">
    <property type="term" value="C:cytoplasm"/>
    <property type="evidence" value="ECO:0007669"/>
    <property type="project" value="UniProtKB-SubCell"/>
</dbReference>
<dbReference type="GO" id="GO:0005730">
    <property type="term" value="C:nucleolus"/>
    <property type="evidence" value="ECO:0007669"/>
    <property type="project" value="InterPro"/>
</dbReference>
<dbReference type="GO" id="GO:0035861">
    <property type="term" value="C:site of double-strand break"/>
    <property type="evidence" value="ECO:0000318"/>
    <property type="project" value="GO_Central"/>
</dbReference>
<dbReference type="GO" id="GO:0051301">
    <property type="term" value="P:cell division"/>
    <property type="evidence" value="ECO:0007669"/>
    <property type="project" value="UniProtKB-KW"/>
</dbReference>
<dbReference type="GO" id="GO:0000077">
    <property type="term" value="P:DNA damage checkpoint signaling"/>
    <property type="evidence" value="ECO:0000250"/>
    <property type="project" value="dictyBase"/>
</dbReference>
<dbReference type="GO" id="GO:0000076">
    <property type="term" value="P:DNA replication checkpoint signaling"/>
    <property type="evidence" value="ECO:0000250"/>
    <property type="project" value="dictyBase"/>
</dbReference>
<dbReference type="GO" id="GO:0000724">
    <property type="term" value="P:double-strand break repair via homologous recombination"/>
    <property type="evidence" value="ECO:0000318"/>
    <property type="project" value="GO_Central"/>
</dbReference>
<dbReference type="GO" id="GO:0044778">
    <property type="term" value="P:meiotic DNA integrity checkpoint signaling"/>
    <property type="evidence" value="ECO:0000318"/>
    <property type="project" value="GO_Central"/>
</dbReference>
<dbReference type="GO" id="GO:0033314">
    <property type="term" value="P:mitotic DNA replication checkpoint signaling"/>
    <property type="evidence" value="ECO:0000318"/>
    <property type="project" value="GO_Central"/>
</dbReference>
<dbReference type="GO" id="GO:0031573">
    <property type="term" value="P:mitotic intra-S DNA damage checkpoint signaling"/>
    <property type="evidence" value="ECO:0000318"/>
    <property type="project" value="GO_Central"/>
</dbReference>
<dbReference type="GO" id="GO:0006289">
    <property type="term" value="P:nucleotide-excision repair"/>
    <property type="evidence" value="ECO:0000318"/>
    <property type="project" value="GO_Central"/>
</dbReference>
<dbReference type="GO" id="GO:0000723">
    <property type="term" value="P:telomere maintenance"/>
    <property type="evidence" value="ECO:0000318"/>
    <property type="project" value="GO_Central"/>
</dbReference>
<dbReference type="Gene3D" id="3.70.10.10">
    <property type="match status" value="1"/>
</dbReference>
<dbReference type="InterPro" id="IPR016580">
    <property type="entry name" value="Cell_cycle_HUS1"/>
</dbReference>
<dbReference type="InterPro" id="IPR046938">
    <property type="entry name" value="DNA_clamp_sf"/>
</dbReference>
<dbReference type="InterPro" id="IPR007150">
    <property type="entry name" value="Hus1/Mec3"/>
</dbReference>
<dbReference type="PANTHER" id="PTHR12900:SF0">
    <property type="entry name" value="CHECKPOINT PROTEIN"/>
    <property type="match status" value="1"/>
</dbReference>
<dbReference type="PANTHER" id="PTHR12900">
    <property type="entry name" value="MITOTIC AND DNA DAMAGE CHECKPOINT PROTEIN HUS1"/>
    <property type="match status" value="1"/>
</dbReference>
<dbReference type="Pfam" id="PF04005">
    <property type="entry name" value="Hus1"/>
    <property type="match status" value="1"/>
</dbReference>
<dbReference type="PIRSF" id="PIRSF011312">
    <property type="entry name" value="Cell_cycle_HUS1"/>
    <property type="match status" value="1"/>
</dbReference>
<dbReference type="SUPFAM" id="SSF55979">
    <property type="entry name" value="DNA clamp"/>
    <property type="match status" value="1"/>
</dbReference>
<gene>
    <name type="primary">hus1</name>
    <name type="ORF">DDB_G0285353</name>
</gene>